<protein>
    <recommendedName>
        <fullName evidence="1">DNA replication and repair protein RecF</fullName>
    </recommendedName>
</protein>
<keyword id="KW-0067">ATP-binding</keyword>
<keyword id="KW-0963">Cytoplasm</keyword>
<keyword id="KW-0227">DNA damage</keyword>
<keyword id="KW-0234">DNA repair</keyword>
<keyword id="KW-0235">DNA replication</keyword>
<keyword id="KW-0238">DNA-binding</keyword>
<keyword id="KW-0547">Nucleotide-binding</keyword>
<keyword id="KW-1185">Reference proteome</keyword>
<keyword id="KW-0742">SOS response</keyword>
<sequence length="376" mass="40776">MMTNKVSLSRLKLTDFRNYAAAALVLDERHVVLTGDNGSGKTNLLEAVSFLSPGRGLRRAVLSDVTRVGAEATGFSIFADVDGMDGEVAIGTGIEGDGEVVSRRLRLNGTPVKSVDELTDHLRVLWLTPAMDGLFTGSSSDRRRFLDRLVLSLDPGHGRRASDFEKAMRGRNRLLSEGRFDPVWLDGIEKQMAELGISMAVARYEMLGLLKTLIEGRAGNAAFPSATLSLAGFMDDRLNRPAVDLEDEYGLMLRDGRYRDAAAGRTLDGPHRVDLFVRHAEKNMEAERCSTGEQKALLVGLVLAHAQLTANMTGYAPVLLLDEIAAHLDEGRRAALFDLIHALGGQSFMTGTDAAMFSALGERAQFFNVSHGGITA</sequence>
<reference key="1">
    <citation type="journal article" date="2001" name="Science">
        <title>The genome of the natural genetic engineer Agrobacterium tumefaciens C58.</title>
        <authorList>
            <person name="Wood D.W."/>
            <person name="Setubal J.C."/>
            <person name="Kaul R."/>
            <person name="Monks D.E."/>
            <person name="Kitajima J.P."/>
            <person name="Okura V.K."/>
            <person name="Zhou Y."/>
            <person name="Chen L."/>
            <person name="Wood G.E."/>
            <person name="Almeida N.F. Jr."/>
            <person name="Woo L."/>
            <person name="Chen Y."/>
            <person name="Paulsen I.T."/>
            <person name="Eisen J.A."/>
            <person name="Karp P.D."/>
            <person name="Bovee D. Sr."/>
            <person name="Chapman P."/>
            <person name="Clendenning J."/>
            <person name="Deatherage G."/>
            <person name="Gillet W."/>
            <person name="Grant C."/>
            <person name="Kutyavin T."/>
            <person name="Levy R."/>
            <person name="Li M.-J."/>
            <person name="McClelland E."/>
            <person name="Palmieri A."/>
            <person name="Raymond C."/>
            <person name="Rouse G."/>
            <person name="Saenphimmachak C."/>
            <person name="Wu Z."/>
            <person name="Romero P."/>
            <person name="Gordon D."/>
            <person name="Zhang S."/>
            <person name="Yoo H."/>
            <person name="Tao Y."/>
            <person name="Biddle P."/>
            <person name="Jung M."/>
            <person name="Krespan W."/>
            <person name="Perry M."/>
            <person name="Gordon-Kamm B."/>
            <person name="Liao L."/>
            <person name="Kim S."/>
            <person name="Hendrick C."/>
            <person name="Zhao Z.-Y."/>
            <person name="Dolan M."/>
            <person name="Chumley F."/>
            <person name="Tingey S.V."/>
            <person name="Tomb J.-F."/>
            <person name="Gordon M.P."/>
            <person name="Olson M.V."/>
            <person name="Nester E.W."/>
        </authorList>
    </citation>
    <scope>NUCLEOTIDE SEQUENCE [LARGE SCALE GENOMIC DNA]</scope>
    <source>
        <strain>C58 / ATCC 33970</strain>
    </source>
</reference>
<reference key="2">
    <citation type="journal article" date="2001" name="Science">
        <title>Genome sequence of the plant pathogen and biotechnology agent Agrobacterium tumefaciens C58.</title>
        <authorList>
            <person name="Goodner B."/>
            <person name="Hinkle G."/>
            <person name="Gattung S."/>
            <person name="Miller N."/>
            <person name="Blanchard M."/>
            <person name="Qurollo B."/>
            <person name="Goldman B.S."/>
            <person name="Cao Y."/>
            <person name="Askenazi M."/>
            <person name="Halling C."/>
            <person name="Mullin L."/>
            <person name="Houmiel K."/>
            <person name="Gordon J."/>
            <person name="Vaudin M."/>
            <person name="Iartchouk O."/>
            <person name="Epp A."/>
            <person name="Liu F."/>
            <person name="Wollam C."/>
            <person name="Allinger M."/>
            <person name="Doughty D."/>
            <person name="Scott C."/>
            <person name="Lappas C."/>
            <person name="Markelz B."/>
            <person name="Flanagan C."/>
            <person name="Crowell C."/>
            <person name="Gurson J."/>
            <person name="Lomo C."/>
            <person name="Sear C."/>
            <person name="Strub G."/>
            <person name="Cielo C."/>
            <person name="Slater S."/>
        </authorList>
    </citation>
    <scope>NUCLEOTIDE SEQUENCE [LARGE SCALE GENOMIC DNA]</scope>
    <source>
        <strain>C58 / ATCC 33970</strain>
    </source>
</reference>
<proteinExistence type="inferred from homology"/>
<dbReference type="EMBL" id="AE007869">
    <property type="protein sequence ID" value="AAK85892.2"/>
    <property type="status" value="ALT_INIT"/>
    <property type="molecule type" value="Genomic_DNA"/>
</dbReference>
<dbReference type="PIR" id="AD2585">
    <property type="entry name" value="AD2585"/>
</dbReference>
<dbReference type="PIR" id="C97367">
    <property type="entry name" value="C97367"/>
</dbReference>
<dbReference type="RefSeq" id="NP_353107.2">
    <property type="nucleotide sequence ID" value="NC_003062.2"/>
</dbReference>
<dbReference type="RefSeq" id="WP_010970638.1">
    <property type="nucleotide sequence ID" value="NC_003062.2"/>
</dbReference>
<dbReference type="SMR" id="Q8UJ65"/>
<dbReference type="STRING" id="176299.Atu0073"/>
<dbReference type="EnsemblBacteria" id="AAK85892">
    <property type="protein sequence ID" value="AAK85892"/>
    <property type="gene ID" value="Atu0073"/>
</dbReference>
<dbReference type="GeneID" id="1132111"/>
<dbReference type="KEGG" id="atu:Atu0073"/>
<dbReference type="PATRIC" id="fig|176299.10.peg.66"/>
<dbReference type="eggNOG" id="COG1195">
    <property type="taxonomic scope" value="Bacteria"/>
</dbReference>
<dbReference type="HOGENOM" id="CLU_040267_2_0_5"/>
<dbReference type="OrthoDB" id="9803889at2"/>
<dbReference type="BioCyc" id="AGRO:ATU0073-MONOMER"/>
<dbReference type="Proteomes" id="UP000000813">
    <property type="component" value="Chromosome circular"/>
</dbReference>
<dbReference type="GO" id="GO:0005737">
    <property type="term" value="C:cytoplasm"/>
    <property type="evidence" value="ECO:0007669"/>
    <property type="project" value="UniProtKB-SubCell"/>
</dbReference>
<dbReference type="GO" id="GO:0005524">
    <property type="term" value="F:ATP binding"/>
    <property type="evidence" value="ECO:0007669"/>
    <property type="project" value="UniProtKB-UniRule"/>
</dbReference>
<dbReference type="GO" id="GO:0016887">
    <property type="term" value="F:ATP hydrolysis activity"/>
    <property type="evidence" value="ECO:0007669"/>
    <property type="project" value="InterPro"/>
</dbReference>
<dbReference type="GO" id="GO:0003697">
    <property type="term" value="F:single-stranded DNA binding"/>
    <property type="evidence" value="ECO:0007669"/>
    <property type="project" value="UniProtKB-UniRule"/>
</dbReference>
<dbReference type="GO" id="GO:0006260">
    <property type="term" value="P:DNA replication"/>
    <property type="evidence" value="ECO:0007669"/>
    <property type="project" value="UniProtKB-UniRule"/>
</dbReference>
<dbReference type="GO" id="GO:0000731">
    <property type="term" value="P:DNA synthesis involved in DNA repair"/>
    <property type="evidence" value="ECO:0007669"/>
    <property type="project" value="TreeGrafter"/>
</dbReference>
<dbReference type="GO" id="GO:0006302">
    <property type="term" value="P:double-strand break repair"/>
    <property type="evidence" value="ECO:0007669"/>
    <property type="project" value="TreeGrafter"/>
</dbReference>
<dbReference type="GO" id="GO:0009432">
    <property type="term" value="P:SOS response"/>
    <property type="evidence" value="ECO:0007669"/>
    <property type="project" value="UniProtKB-UniRule"/>
</dbReference>
<dbReference type="CDD" id="cd03242">
    <property type="entry name" value="ABC_RecF"/>
    <property type="match status" value="1"/>
</dbReference>
<dbReference type="Gene3D" id="3.40.50.300">
    <property type="entry name" value="P-loop containing nucleotide triphosphate hydrolases"/>
    <property type="match status" value="1"/>
</dbReference>
<dbReference type="Gene3D" id="1.20.1050.90">
    <property type="entry name" value="RecF/RecN/SMC, N-terminal domain"/>
    <property type="match status" value="1"/>
</dbReference>
<dbReference type="HAMAP" id="MF_00365">
    <property type="entry name" value="RecF"/>
    <property type="match status" value="1"/>
</dbReference>
<dbReference type="InterPro" id="IPR003593">
    <property type="entry name" value="AAA+_ATPase"/>
</dbReference>
<dbReference type="InterPro" id="IPR001238">
    <property type="entry name" value="DNA-binding_RecF"/>
</dbReference>
<dbReference type="InterPro" id="IPR018078">
    <property type="entry name" value="DNA-binding_RecF_CS"/>
</dbReference>
<dbReference type="InterPro" id="IPR027417">
    <property type="entry name" value="P-loop_NTPase"/>
</dbReference>
<dbReference type="InterPro" id="IPR003395">
    <property type="entry name" value="RecF/RecN/SMC_N"/>
</dbReference>
<dbReference type="InterPro" id="IPR042174">
    <property type="entry name" value="RecF_2"/>
</dbReference>
<dbReference type="NCBIfam" id="TIGR00611">
    <property type="entry name" value="recf"/>
    <property type="match status" value="1"/>
</dbReference>
<dbReference type="PANTHER" id="PTHR32182">
    <property type="entry name" value="DNA REPLICATION AND REPAIR PROTEIN RECF"/>
    <property type="match status" value="1"/>
</dbReference>
<dbReference type="PANTHER" id="PTHR32182:SF0">
    <property type="entry name" value="DNA REPLICATION AND REPAIR PROTEIN RECF"/>
    <property type="match status" value="1"/>
</dbReference>
<dbReference type="Pfam" id="PF02463">
    <property type="entry name" value="SMC_N"/>
    <property type="match status" value="1"/>
</dbReference>
<dbReference type="SMART" id="SM00382">
    <property type="entry name" value="AAA"/>
    <property type="match status" value="1"/>
</dbReference>
<dbReference type="SUPFAM" id="SSF52540">
    <property type="entry name" value="P-loop containing nucleoside triphosphate hydrolases"/>
    <property type="match status" value="1"/>
</dbReference>
<dbReference type="PROSITE" id="PS00617">
    <property type="entry name" value="RECF_1"/>
    <property type="match status" value="1"/>
</dbReference>
<dbReference type="PROSITE" id="PS00618">
    <property type="entry name" value="RECF_2"/>
    <property type="match status" value="1"/>
</dbReference>
<name>RECF_AGRFC</name>
<organism>
    <name type="scientific">Agrobacterium fabrum (strain C58 / ATCC 33970)</name>
    <name type="common">Agrobacterium tumefaciens (strain C58)</name>
    <dbReference type="NCBI Taxonomy" id="176299"/>
    <lineage>
        <taxon>Bacteria</taxon>
        <taxon>Pseudomonadati</taxon>
        <taxon>Pseudomonadota</taxon>
        <taxon>Alphaproteobacteria</taxon>
        <taxon>Hyphomicrobiales</taxon>
        <taxon>Rhizobiaceae</taxon>
        <taxon>Rhizobium/Agrobacterium group</taxon>
        <taxon>Agrobacterium</taxon>
        <taxon>Agrobacterium tumefaciens complex</taxon>
    </lineage>
</organism>
<accession>Q8UJ65</accession>
<comment type="function">
    <text evidence="1">The RecF protein is involved in DNA metabolism; it is required for DNA replication and normal SOS inducibility. RecF binds preferentially to single-stranded, linear DNA. It also seems to bind ATP.</text>
</comment>
<comment type="subcellular location">
    <subcellularLocation>
        <location evidence="1">Cytoplasm</location>
    </subcellularLocation>
</comment>
<comment type="similarity">
    <text evidence="1">Belongs to the RecF family.</text>
</comment>
<comment type="sequence caution" evidence="2">
    <conflict type="erroneous initiation">
        <sequence resource="EMBL-CDS" id="AAK85892"/>
    </conflict>
</comment>
<feature type="chain" id="PRO_0000196391" description="DNA replication and repair protein RecF">
    <location>
        <begin position="1"/>
        <end position="376"/>
    </location>
</feature>
<feature type="binding site" evidence="1">
    <location>
        <begin position="35"/>
        <end position="42"/>
    </location>
    <ligand>
        <name>ATP</name>
        <dbReference type="ChEBI" id="CHEBI:30616"/>
    </ligand>
</feature>
<gene>
    <name evidence="1" type="primary">recF</name>
    <name type="ordered locus">Atu0073</name>
    <name type="ORF">AGR_C_109</name>
</gene>
<evidence type="ECO:0000255" key="1">
    <source>
        <dbReference type="HAMAP-Rule" id="MF_00365"/>
    </source>
</evidence>
<evidence type="ECO:0000305" key="2"/>